<protein>
    <recommendedName>
        <fullName>Protoheme IX farnesyltransferase, mitochondrial</fullName>
        <ecNumber evidence="2">2.5.1.141</ecNumber>
    </recommendedName>
    <alternativeName>
        <fullName>Heme O synthase</fullName>
    </alternativeName>
</protein>
<feature type="transit peptide" description="Mitochondrion" evidence="3">
    <location>
        <begin position="1"/>
        <end status="unknown"/>
    </location>
</feature>
<feature type="chain" id="PRO_0000035923" description="Protoheme IX farnesyltransferase, mitochondrial">
    <location>
        <begin status="unknown"/>
        <end position="443"/>
    </location>
</feature>
<feature type="transmembrane region" description="Helical" evidence="3">
    <location>
        <begin position="174"/>
        <end position="194"/>
    </location>
</feature>
<feature type="transmembrane region" description="Helical" evidence="3">
    <location>
        <begin position="235"/>
        <end position="255"/>
    </location>
</feature>
<feature type="transmembrane region" description="Helical" evidence="3">
    <location>
        <begin position="257"/>
        <end position="277"/>
    </location>
</feature>
<feature type="transmembrane region" description="Helical" evidence="3">
    <location>
        <begin position="280"/>
        <end position="300"/>
    </location>
</feature>
<feature type="transmembrane region" description="Helical" evidence="3">
    <location>
        <begin position="309"/>
        <end position="329"/>
    </location>
</feature>
<feature type="transmembrane region" description="Helical" evidence="3">
    <location>
        <begin position="364"/>
        <end position="384"/>
    </location>
</feature>
<feature type="transmembrane region" description="Helical" evidence="3">
    <location>
        <begin position="411"/>
        <end position="431"/>
    </location>
</feature>
<feature type="splice variant" id="VSP_056867" description="In isoform 2." evidence="13">
    <original>MAASPHTLSSRLLTG</original>
    <variation>MICQEFWLDYPKSNS</variation>
    <location>
        <begin position="1"/>
        <end position="15"/>
    </location>
</feature>
<feature type="splice variant" id="VSP_056868" description="In isoform 2." evidence="13">
    <location>
        <begin position="16"/>
        <end position="207"/>
    </location>
</feature>
<feature type="sequence variant" id="VAR_057371" description="In dbSNP:rs16948978.">
    <original>T</original>
    <variation>I</variation>
    <location>
        <position position="28"/>
    </location>
</feature>
<feature type="sequence variant" id="VAR_057372" description="In dbSNP:rs2230351.">
    <original>T</original>
    <variation>S</variation>
    <location>
        <position position="62"/>
    </location>
</feature>
<feature type="sequence variant" id="VAR_057373" description="In dbSNP:rs16948986.">
    <original>Y</original>
    <variation>C</variation>
    <location>
        <position position="97"/>
    </location>
</feature>
<feature type="sequence variant" id="VAR_060233" description="In dbSNP:rs2072279." evidence="6 7 10 11 12">
    <original>R</original>
    <variation>Q</variation>
    <location>
        <position position="159"/>
    </location>
</feature>
<feature type="sequence variant" id="VAR_026562" description="In MC4DN3; dbSNP:rs104894555." evidence="5">
    <original>T</original>
    <variation>K</variation>
    <location>
        <position position="196"/>
    </location>
</feature>
<feature type="sequence variant" id="VAR_026563" description="In MC4DN3; dbSNP:rs104894560." evidence="4">
    <original>N</original>
    <variation>K</variation>
    <location>
        <position position="204"/>
    </location>
</feature>
<feature type="sequence variant" id="VAR_026564" description="In MC4DN3; dbSNP:rs104894556." evidence="5">
    <original>P</original>
    <variation>L</variation>
    <location>
        <position position="225"/>
    </location>
</feature>
<feature type="sequence variant" id="VAR_064768" description="In dbSNP:rs587780911." evidence="8">
    <original>L</original>
    <variation>H</variation>
    <location>
        <position position="258"/>
    </location>
</feature>
<feature type="sequence variant" id="VAR_076181" description="In MC4DN3; dbSNP:rs753048807." evidence="9">
    <original>G</original>
    <variation>R</variation>
    <location>
        <position position="288"/>
    </location>
</feature>
<feature type="sequence variant" id="VAR_026565" description="In MC4DN3; dbSNP:rs104894557." evidence="5">
    <original>D</original>
    <variation>G</variation>
    <location>
        <position position="336"/>
    </location>
</feature>
<feature type="sequence variant" id="VAR_026566" description="In MC4DN3; dbSNP:rs104894557." evidence="5">
    <original>D</original>
    <variation>V</variation>
    <location>
        <position position="336"/>
    </location>
</feature>
<feature type="sequence variant" id="VAR_060234" description="In dbSNP:rs1050214." evidence="10">
    <original>G</original>
    <variation>D</variation>
    <location>
        <position position="340"/>
    </location>
</feature>
<feature type="sequence variant" id="VAR_076182" description="In MC4DN3; dbSNP:rs773079584." evidence="9">
    <original>P</original>
    <variation>L</variation>
    <location>
        <position position="420"/>
    </location>
</feature>
<feature type="sequence conflict" description="In Ref. 1; AAA21148." evidence="14" ref="1">
    <original>A</original>
    <variation>T</variation>
    <location>
        <position position="303"/>
    </location>
</feature>
<feature type="sequence conflict" description="In Ref. 1; AAA21148." evidence="14" ref="1">
    <original>Y</original>
    <variation>H</variation>
    <location>
        <position position="394"/>
    </location>
</feature>
<reference key="1">
    <citation type="journal article" date="1994" name="Proc. Natl. Acad. Sci. U.S.A.">
        <title>Isolation of a human cDNA for heme A:farnesyltransferase by functional complementation of a yeast cox10 mutant.</title>
        <authorList>
            <person name="Glerum M.D."/>
            <person name="Tzagoloff A."/>
        </authorList>
    </citation>
    <scope>NUCLEOTIDE SEQUENCE [MRNA] (ISOFORM 1)</scope>
    <scope>VARIANTS GLN-159 AND ASP-340</scope>
</reference>
<reference key="2">
    <citation type="journal article" date="1997" name="Genomics">
        <title>Genomic structure and expression of the human heme A:farnesyltransferase (COX10) gene.</title>
        <authorList>
            <person name="Murakami T."/>
            <person name="Reiter L.T."/>
            <person name="Lupski J.R."/>
        </authorList>
    </citation>
    <scope>NUCLEOTIDE SEQUENCE [GENOMIC DNA]</scope>
    <scope>VARIANT GLN-159</scope>
</reference>
<reference key="3">
    <citation type="journal article" date="2004" name="Nat. Genet.">
        <title>Complete sequencing and characterization of 21,243 full-length human cDNAs.</title>
        <authorList>
            <person name="Ota T."/>
            <person name="Suzuki Y."/>
            <person name="Nishikawa T."/>
            <person name="Otsuki T."/>
            <person name="Sugiyama T."/>
            <person name="Irie R."/>
            <person name="Wakamatsu A."/>
            <person name="Hayashi K."/>
            <person name="Sato H."/>
            <person name="Nagai K."/>
            <person name="Kimura K."/>
            <person name="Makita H."/>
            <person name="Sekine M."/>
            <person name="Obayashi M."/>
            <person name="Nishi T."/>
            <person name="Shibahara T."/>
            <person name="Tanaka T."/>
            <person name="Ishii S."/>
            <person name="Yamamoto J."/>
            <person name="Saito K."/>
            <person name="Kawai Y."/>
            <person name="Isono Y."/>
            <person name="Nakamura Y."/>
            <person name="Nagahari K."/>
            <person name="Murakami K."/>
            <person name="Yasuda T."/>
            <person name="Iwayanagi T."/>
            <person name="Wagatsuma M."/>
            <person name="Shiratori A."/>
            <person name="Sudo H."/>
            <person name="Hosoiri T."/>
            <person name="Kaku Y."/>
            <person name="Kodaira H."/>
            <person name="Kondo H."/>
            <person name="Sugawara M."/>
            <person name="Takahashi M."/>
            <person name="Kanda K."/>
            <person name="Yokoi T."/>
            <person name="Furuya T."/>
            <person name="Kikkawa E."/>
            <person name="Omura Y."/>
            <person name="Abe K."/>
            <person name="Kamihara K."/>
            <person name="Katsuta N."/>
            <person name="Sato K."/>
            <person name="Tanikawa M."/>
            <person name="Yamazaki M."/>
            <person name="Ninomiya K."/>
            <person name="Ishibashi T."/>
            <person name="Yamashita H."/>
            <person name="Murakawa K."/>
            <person name="Fujimori K."/>
            <person name="Tanai H."/>
            <person name="Kimata M."/>
            <person name="Watanabe M."/>
            <person name="Hiraoka S."/>
            <person name="Chiba Y."/>
            <person name="Ishida S."/>
            <person name="Ono Y."/>
            <person name="Takiguchi S."/>
            <person name="Watanabe S."/>
            <person name="Yosida M."/>
            <person name="Hotuta T."/>
            <person name="Kusano J."/>
            <person name="Kanehori K."/>
            <person name="Takahashi-Fujii A."/>
            <person name="Hara H."/>
            <person name="Tanase T.-O."/>
            <person name="Nomura Y."/>
            <person name="Togiya S."/>
            <person name="Komai F."/>
            <person name="Hara R."/>
            <person name="Takeuchi K."/>
            <person name="Arita M."/>
            <person name="Imose N."/>
            <person name="Musashino K."/>
            <person name="Yuuki H."/>
            <person name="Oshima A."/>
            <person name="Sasaki N."/>
            <person name="Aotsuka S."/>
            <person name="Yoshikawa Y."/>
            <person name="Matsunawa H."/>
            <person name="Ichihara T."/>
            <person name="Shiohata N."/>
            <person name="Sano S."/>
            <person name="Moriya S."/>
            <person name="Momiyama H."/>
            <person name="Satoh N."/>
            <person name="Takami S."/>
            <person name="Terashima Y."/>
            <person name="Suzuki O."/>
            <person name="Nakagawa S."/>
            <person name="Senoh A."/>
            <person name="Mizoguchi H."/>
            <person name="Goto Y."/>
            <person name="Shimizu F."/>
            <person name="Wakebe H."/>
            <person name="Hishigaki H."/>
            <person name="Watanabe T."/>
            <person name="Sugiyama A."/>
            <person name="Takemoto M."/>
            <person name="Kawakami B."/>
            <person name="Yamazaki M."/>
            <person name="Watanabe K."/>
            <person name="Kumagai A."/>
            <person name="Itakura S."/>
            <person name="Fukuzumi Y."/>
            <person name="Fujimori Y."/>
            <person name="Komiyama M."/>
            <person name="Tashiro H."/>
            <person name="Tanigami A."/>
            <person name="Fujiwara T."/>
            <person name="Ono T."/>
            <person name="Yamada K."/>
            <person name="Fujii Y."/>
            <person name="Ozaki K."/>
            <person name="Hirao M."/>
            <person name="Ohmori Y."/>
            <person name="Kawabata A."/>
            <person name="Hikiji T."/>
            <person name="Kobatake N."/>
            <person name="Inagaki H."/>
            <person name="Ikema Y."/>
            <person name="Okamoto S."/>
            <person name="Okitani R."/>
            <person name="Kawakami T."/>
            <person name="Noguchi S."/>
            <person name="Itoh T."/>
            <person name="Shigeta K."/>
            <person name="Senba T."/>
            <person name="Matsumura K."/>
            <person name="Nakajima Y."/>
            <person name="Mizuno T."/>
            <person name="Morinaga M."/>
            <person name="Sasaki M."/>
            <person name="Togashi T."/>
            <person name="Oyama M."/>
            <person name="Hata H."/>
            <person name="Watanabe M."/>
            <person name="Komatsu T."/>
            <person name="Mizushima-Sugano J."/>
            <person name="Satoh T."/>
            <person name="Shirai Y."/>
            <person name="Takahashi Y."/>
            <person name="Nakagawa K."/>
            <person name="Okumura K."/>
            <person name="Nagase T."/>
            <person name="Nomura N."/>
            <person name="Kikuchi H."/>
            <person name="Masuho Y."/>
            <person name="Yamashita R."/>
            <person name="Nakai K."/>
            <person name="Yada T."/>
            <person name="Nakamura Y."/>
            <person name="Ohara O."/>
            <person name="Isogai T."/>
            <person name="Sugano S."/>
        </authorList>
    </citation>
    <scope>NUCLEOTIDE SEQUENCE [LARGE SCALE MRNA] (ISOFORMS 1 AND 2)</scope>
    <scope>VARIANT GLN-159</scope>
    <source>
        <tissue>Brain</tissue>
        <tissue>Substantia nigra</tissue>
    </source>
</reference>
<reference key="4">
    <citation type="submission" date="2003-05" db="EMBL/GenBank/DDBJ databases">
        <title>Cloning of human full-length CDSs in BD Creator(TM) system donor vector.</title>
        <authorList>
            <person name="Kalnine N."/>
            <person name="Chen X."/>
            <person name="Rolfs A."/>
            <person name="Halleck A."/>
            <person name="Hines L."/>
            <person name="Eisenstein S."/>
            <person name="Koundinya M."/>
            <person name="Raphael J."/>
            <person name="Moreira D."/>
            <person name="Kelley T."/>
            <person name="LaBaer J."/>
            <person name="Lin Y."/>
            <person name="Phelan M."/>
            <person name="Farmer A."/>
        </authorList>
    </citation>
    <scope>NUCLEOTIDE SEQUENCE [LARGE SCALE MRNA] (ISOFORM 1)</scope>
    <scope>VARIANT GLN-159</scope>
</reference>
<reference key="5">
    <citation type="journal article" date="2006" name="Nature">
        <title>DNA sequence of human chromosome 17 and analysis of rearrangement in the human lineage.</title>
        <authorList>
            <person name="Zody M.C."/>
            <person name="Garber M."/>
            <person name="Adams D.J."/>
            <person name="Sharpe T."/>
            <person name="Harrow J."/>
            <person name="Lupski J.R."/>
            <person name="Nicholson C."/>
            <person name="Searle S.M."/>
            <person name="Wilming L."/>
            <person name="Young S.K."/>
            <person name="Abouelleil A."/>
            <person name="Allen N.R."/>
            <person name="Bi W."/>
            <person name="Bloom T."/>
            <person name="Borowsky M.L."/>
            <person name="Bugalter B.E."/>
            <person name="Butler J."/>
            <person name="Chang J.L."/>
            <person name="Chen C.-K."/>
            <person name="Cook A."/>
            <person name="Corum B."/>
            <person name="Cuomo C.A."/>
            <person name="de Jong P.J."/>
            <person name="DeCaprio D."/>
            <person name="Dewar K."/>
            <person name="FitzGerald M."/>
            <person name="Gilbert J."/>
            <person name="Gibson R."/>
            <person name="Gnerre S."/>
            <person name="Goldstein S."/>
            <person name="Grafham D.V."/>
            <person name="Grocock R."/>
            <person name="Hafez N."/>
            <person name="Hagopian D.S."/>
            <person name="Hart E."/>
            <person name="Norman C.H."/>
            <person name="Humphray S."/>
            <person name="Jaffe D.B."/>
            <person name="Jones M."/>
            <person name="Kamal M."/>
            <person name="Khodiyar V.K."/>
            <person name="LaButti K."/>
            <person name="Laird G."/>
            <person name="Lehoczky J."/>
            <person name="Liu X."/>
            <person name="Lokyitsang T."/>
            <person name="Loveland J."/>
            <person name="Lui A."/>
            <person name="Macdonald P."/>
            <person name="Major J.E."/>
            <person name="Matthews L."/>
            <person name="Mauceli E."/>
            <person name="McCarroll S.A."/>
            <person name="Mihalev A.H."/>
            <person name="Mudge J."/>
            <person name="Nguyen C."/>
            <person name="Nicol R."/>
            <person name="O'Leary S.B."/>
            <person name="Osoegawa K."/>
            <person name="Schwartz D.C."/>
            <person name="Shaw-Smith C."/>
            <person name="Stankiewicz P."/>
            <person name="Steward C."/>
            <person name="Swarbreck D."/>
            <person name="Venkataraman V."/>
            <person name="Whittaker C.A."/>
            <person name="Yang X."/>
            <person name="Zimmer A.R."/>
            <person name="Bradley A."/>
            <person name="Hubbard T."/>
            <person name="Birren B.W."/>
            <person name="Rogers J."/>
            <person name="Lander E.S."/>
            <person name="Nusbaum C."/>
        </authorList>
    </citation>
    <scope>NUCLEOTIDE SEQUENCE [LARGE SCALE GENOMIC DNA]</scope>
</reference>
<reference key="6">
    <citation type="journal article" date="2004" name="Genome Res.">
        <title>The status, quality, and expansion of the NIH full-length cDNA project: the Mammalian Gene Collection (MGC).</title>
        <authorList>
            <consortium name="The MGC Project Team"/>
        </authorList>
    </citation>
    <scope>NUCLEOTIDE SEQUENCE [LARGE SCALE MRNA] (ISOFORM 1)</scope>
    <scope>VARIANT GLN-159</scope>
    <source>
        <tissue>Brain</tissue>
    </source>
</reference>
<reference key="7">
    <citation type="journal article" date="2000" name="Hum. Mol. Genet.">
        <title>A mutation in the human heme A:farnesyltransferase gene (COX10) causes cytochrome c oxidase deficiency.</title>
        <authorList>
            <person name="Valnot I."/>
            <person name="von Kleist-Retzow J.C."/>
            <person name="Barrientos A."/>
            <person name="Gorbatyuk M."/>
            <person name="Taanman J.W."/>
            <person name="Mehaye B."/>
            <person name="Rustin P."/>
            <person name="Tzagoloff A."/>
            <person name="Munnich A."/>
            <person name="Rotig A."/>
        </authorList>
    </citation>
    <scope>VARIANT MC4DN3 LYS-204</scope>
</reference>
<reference key="8">
    <citation type="journal article" date="2003" name="Hum. Mol. Genet.">
        <title>Mutations in COX10 result in a defect in mitochondrial heme A biosynthesis and account for multiple, early-onset clinical phenotypes associated with isolated COX deficiency.</title>
        <authorList>
            <person name="Antonicka H."/>
            <person name="Leary S.C."/>
            <person name="Guercin G.-H."/>
            <person name="Agar J.N."/>
            <person name="Horvath R."/>
            <person name="Kennaway N.G."/>
            <person name="Harding C.O."/>
            <person name="Jaksch M."/>
            <person name="Shoubridge E.A."/>
        </authorList>
    </citation>
    <scope>VARIANTS MC4DN3 LYS-196; LEU-225; GLY-336 AND VAL-336</scope>
</reference>
<reference key="9">
    <citation type="journal article" date="2011" name="Nature">
        <title>Exome sequencing identifies frequent mutation of the SWI/SNF complex gene PBRM1 in renal carcinoma.</title>
        <authorList>
            <person name="Varela I."/>
            <person name="Tarpey P."/>
            <person name="Raine K."/>
            <person name="Huang D."/>
            <person name="Ong C.K."/>
            <person name="Stephens P."/>
            <person name="Davies H."/>
            <person name="Jones D."/>
            <person name="Lin M.L."/>
            <person name="Teague J."/>
            <person name="Bignell G."/>
            <person name="Butler A."/>
            <person name="Cho J."/>
            <person name="Dalgliesh G.L."/>
            <person name="Galappaththige D."/>
            <person name="Greenman C."/>
            <person name="Hardy C."/>
            <person name="Jia M."/>
            <person name="Latimer C."/>
            <person name="Lau K.W."/>
            <person name="Marshall J."/>
            <person name="McLaren S."/>
            <person name="Menzies A."/>
            <person name="Mudie L."/>
            <person name="Stebbings L."/>
            <person name="Largaespada D.A."/>
            <person name="Wessels L.F.A."/>
            <person name="Richard S."/>
            <person name="Kahnoski R.J."/>
            <person name="Anema J."/>
            <person name="Tuveson D.A."/>
            <person name="Perez-Mancera P.A."/>
            <person name="Mustonen V."/>
            <person name="Fischer A."/>
            <person name="Adams D.J."/>
            <person name="Rust A."/>
            <person name="Chan-On W."/>
            <person name="Subimerb C."/>
            <person name="Dykema K."/>
            <person name="Furge K."/>
            <person name="Campbell P.J."/>
            <person name="Teh B.T."/>
            <person name="Stratton M.R."/>
            <person name="Futreal P.A."/>
        </authorList>
    </citation>
    <scope>VARIANT HIS-258</scope>
</reference>
<reference key="10">
    <citation type="journal article" date="2016" name="PLoS Genet.">
        <title>A comprehensive genomic analysis reveals the genetic landscape of mitochondrial respiratory chain complex deficiencies.</title>
        <authorList>
            <person name="Kohda M."/>
            <person name="Tokuzawa Y."/>
            <person name="Kishita Y."/>
            <person name="Nyuzuki H."/>
            <person name="Moriyama Y."/>
            <person name="Mizuno Y."/>
            <person name="Hirata T."/>
            <person name="Yatsuka Y."/>
            <person name="Yamashita-Sugahara Y."/>
            <person name="Nakachi Y."/>
            <person name="Kato H."/>
            <person name="Okuda A."/>
            <person name="Tamaru S."/>
            <person name="Borna N.N."/>
            <person name="Banshoya K."/>
            <person name="Aigaki T."/>
            <person name="Sato-Miyata Y."/>
            <person name="Ohnuma K."/>
            <person name="Suzuki T."/>
            <person name="Nagao A."/>
            <person name="Maehata H."/>
            <person name="Matsuda F."/>
            <person name="Higasa K."/>
            <person name="Nagasaki M."/>
            <person name="Yasuda J."/>
            <person name="Yamamoto M."/>
            <person name="Fushimi T."/>
            <person name="Shimura M."/>
            <person name="Kaiho-Ichimoto K."/>
            <person name="Harashima H."/>
            <person name="Yamazaki T."/>
            <person name="Mori M."/>
            <person name="Murayama K."/>
            <person name="Ohtake A."/>
            <person name="Okazaki Y."/>
        </authorList>
    </citation>
    <scope>VARIANTS MC4DN3 ARG-288 AND LEU-420</scope>
</reference>
<dbReference type="EC" id="2.5.1.141" evidence="2"/>
<dbReference type="EMBL" id="U09466">
    <property type="protein sequence ID" value="AAA21148.1"/>
    <property type="molecule type" value="mRNA"/>
</dbReference>
<dbReference type="EMBL" id="U82010">
    <property type="protein sequence ID" value="AAC51330.1"/>
    <property type="molecule type" value="Genomic_DNA"/>
</dbReference>
<dbReference type="EMBL" id="U82004">
    <property type="protein sequence ID" value="AAC51330.1"/>
    <property type="status" value="JOINED"/>
    <property type="molecule type" value="Genomic_DNA"/>
</dbReference>
<dbReference type="EMBL" id="U82005">
    <property type="protein sequence ID" value="AAC51330.1"/>
    <property type="status" value="JOINED"/>
    <property type="molecule type" value="Genomic_DNA"/>
</dbReference>
<dbReference type="EMBL" id="U82006">
    <property type="protein sequence ID" value="AAC51330.1"/>
    <property type="status" value="JOINED"/>
    <property type="molecule type" value="Genomic_DNA"/>
</dbReference>
<dbReference type="EMBL" id="U82007">
    <property type="protein sequence ID" value="AAC51330.1"/>
    <property type="status" value="JOINED"/>
    <property type="molecule type" value="Genomic_DNA"/>
</dbReference>
<dbReference type="EMBL" id="U82008">
    <property type="protein sequence ID" value="AAC51330.1"/>
    <property type="status" value="JOINED"/>
    <property type="molecule type" value="Genomic_DNA"/>
</dbReference>
<dbReference type="EMBL" id="U82009">
    <property type="protein sequence ID" value="AAC51330.1"/>
    <property type="status" value="JOINED"/>
    <property type="molecule type" value="Genomic_DNA"/>
</dbReference>
<dbReference type="EMBL" id="AK295925">
    <property type="protein sequence ID" value="BAG58712.1"/>
    <property type="molecule type" value="mRNA"/>
</dbReference>
<dbReference type="EMBL" id="AK312718">
    <property type="protein sequence ID" value="BAG35592.1"/>
    <property type="molecule type" value="mRNA"/>
</dbReference>
<dbReference type="EMBL" id="BT006985">
    <property type="protein sequence ID" value="AAP35631.1"/>
    <property type="molecule type" value="mRNA"/>
</dbReference>
<dbReference type="EMBL" id="AC005224">
    <property type="status" value="NOT_ANNOTATED_CDS"/>
    <property type="molecule type" value="Genomic_DNA"/>
</dbReference>
<dbReference type="EMBL" id="AC005389">
    <property type="status" value="NOT_ANNOTATED_CDS"/>
    <property type="molecule type" value="Genomic_DNA"/>
</dbReference>
<dbReference type="EMBL" id="BC000060">
    <property type="protein sequence ID" value="AAH00060.1"/>
    <property type="molecule type" value="mRNA"/>
</dbReference>
<dbReference type="EMBL" id="BC006394">
    <property type="protein sequence ID" value="AAH06394.1"/>
    <property type="molecule type" value="mRNA"/>
</dbReference>
<dbReference type="CCDS" id="CCDS11166.1">
    <molecule id="Q12887-1"/>
</dbReference>
<dbReference type="PIR" id="I38603">
    <property type="entry name" value="I38603"/>
</dbReference>
<dbReference type="RefSeq" id="NP_001294.2">
    <molecule id="Q12887-1"/>
    <property type="nucleotide sequence ID" value="NM_001303.3"/>
</dbReference>
<dbReference type="SMR" id="Q12887"/>
<dbReference type="BioGRID" id="107745">
    <property type="interactions" value="8"/>
</dbReference>
<dbReference type="FunCoup" id="Q12887">
    <property type="interactions" value="1945"/>
</dbReference>
<dbReference type="IntAct" id="Q12887">
    <property type="interactions" value="7"/>
</dbReference>
<dbReference type="MINT" id="Q12887"/>
<dbReference type="STRING" id="9606.ENSP00000261643"/>
<dbReference type="iPTMnet" id="Q12887"/>
<dbReference type="PhosphoSitePlus" id="Q12887"/>
<dbReference type="BioMuta" id="COX10"/>
<dbReference type="DMDM" id="292495084"/>
<dbReference type="jPOST" id="Q12887"/>
<dbReference type="MassIVE" id="Q12887"/>
<dbReference type="PaxDb" id="9606-ENSP00000261643"/>
<dbReference type="PeptideAtlas" id="Q12887"/>
<dbReference type="ProteomicsDB" id="59002">
    <molecule id="Q12887-1"/>
</dbReference>
<dbReference type="Pumba" id="Q12887"/>
<dbReference type="Antibodypedia" id="25099">
    <property type="antibodies" value="222 antibodies from 25 providers"/>
</dbReference>
<dbReference type="DNASU" id="1352"/>
<dbReference type="Ensembl" id="ENST00000261643.8">
    <molecule id="Q12887-1"/>
    <property type="protein sequence ID" value="ENSP00000261643.3"/>
    <property type="gene ID" value="ENSG00000006695.12"/>
</dbReference>
<dbReference type="Ensembl" id="ENST00000664217.1">
    <molecule id="Q12887-1"/>
    <property type="protein sequence ID" value="ENSP00000499396.1"/>
    <property type="gene ID" value="ENSG00000006695.12"/>
</dbReference>
<dbReference type="GeneID" id="1352"/>
<dbReference type="KEGG" id="hsa:1352"/>
<dbReference type="MANE-Select" id="ENST00000261643.8">
    <property type="protein sequence ID" value="ENSP00000261643.3"/>
    <property type="RefSeq nucleotide sequence ID" value="NM_001303.4"/>
    <property type="RefSeq protein sequence ID" value="NP_001294.2"/>
</dbReference>
<dbReference type="UCSC" id="uc002gof.5">
    <molecule id="Q12887-1"/>
    <property type="organism name" value="human"/>
</dbReference>
<dbReference type="AGR" id="HGNC:2260"/>
<dbReference type="CTD" id="1352"/>
<dbReference type="DisGeNET" id="1352"/>
<dbReference type="GeneCards" id="COX10"/>
<dbReference type="GeneReviews" id="COX10"/>
<dbReference type="HGNC" id="HGNC:2260">
    <property type="gene designation" value="COX10"/>
</dbReference>
<dbReference type="HPA" id="ENSG00000006695">
    <property type="expression patterns" value="Tissue enhanced (skeletal muscle, tongue)"/>
</dbReference>
<dbReference type="MalaCards" id="COX10"/>
<dbReference type="MIM" id="602125">
    <property type="type" value="gene"/>
</dbReference>
<dbReference type="MIM" id="619046">
    <property type="type" value="phenotype"/>
</dbReference>
<dbReference type="neXtProt" id="NX_Q12887"/>
<dbReference type="OpenTargets" id="ENSG00000006695"/>
<dbReference type="Orphanet" id="254905">
    <property type="disease" value="Isolated cytochrome C oxidase deficiency"/>
</dbReference>
<dbReference type="PharmGKB" id="PA26776"/>
<dbReference type="VEuPathDB" id="HostDB:ENSG00000006695"/>
<dbReference type="eggNOG" id="KOG1380">
    <property type="taxonomic scope" value="Eukaryota"/>
</dbReference>
<dbReference type="GeneTree" id="ENSGT00940000153771"/>
<dbReference type="HOGENOM" id="CLU_029631_2_2_1"/>
<dbReference type="InParanoid" id="Q12887"/>
<dbReference type="OMA" id="MGREPDF"/>
<dbReference type="OrthoDB" id="5211at2759"/>
<dbReference type="PAN-GO" id="Q12887">
    <property type="GO annotations" value="3 GO annotations based on evolutionary models"/>
</dbReference>
<dbReference type="PhylomeDB" id="Q12887"/>
<dbReference type="TreeFam" id="TF105071"/>
<dbReference type="BioCyc" id="MetaCyc:HS00191-MONOMER"/>
<dbReference type="BRENDA" id="2.5.1.141">
    <property type="organism ID" value="2681"/>
</dbReference>
<dbReference type="PathwayCommons" id="Q12887"/>
<dbReference type="Reactome" id="R-HSA-189451">
    <property type="pathway name" value="Heme biosynthesis"/>
</dbReference>
<dbReference type="SignaLink" id="Q12887"/>
<dbReference type="BioGRID-ORCS" id="1352">
    <property type="hits" value="272 hits in 1161 CRISPR screens"/>
</dbReference>
<dbReference type="ChiTaRS" id="COX10">
    <property type="organism name" value="human"/>
</dbReference>
<dbReference type="GeneWiki" id="COX10"/>
<dbReference type="GenomeRNAi" id="1352"/>
<dbReference type="Pharos" id="Q12887">
    <property type="development level" value="Tbio"/>
</dbReference>
<dbReference type="PRO" id="PR:Q12887"/>
<dbReference type="Proteomes" id="UP000005640">
    <property type="component" value="Chromosome 17"/>
</dbReference>
<dbReference type="RNAct" id="Q12887">
    <property type="molecule type" value="protein"/>
</dbReference>
<dbReference type="Bgee" id="ENSG00000006695">
    <property type="expression patterns" value="Expressed in tibialis anterior and 171 other cell types or tissues"/>
</dbReference>
<dbReference type="ExpressionAtlas" id="Q12887">
    <property type="expression patterns" value="baseline and differential"/>
</dbReference>
<dbReference type="GO" id="GO:0070069">
    <property type="term" value="C:cytochrome complex"/>
    <property type="evidence" value="ECO:0000315"/>
    <property type="project" value="BHF-UCL"/>
</dbReference>
<dbReference type="GO" id="GO:0005829">
    <property type="term" value="C:cytosol"/>
    <property type="evidence" value="ECO:0000314"/>
    <property type="project" value="HPA"/>
</dbReference>
<dbReference type="GO" id="GO:0005743">
    <property type="term" value="C:mitochondrial inner membrane"/>
    <property type="evidence" value="ECO:0000304"/>
    <property type="project" value="Reactome"/>
</dbReference>
<dbReference type="GO" id="GO:0005759">
    <property type="term" value="C:mitochondrial matrix"/>
    <property type="evidence" value="ECO:0007669"/>
    <property type="project" value="Ensembl"/>
</dbReference>
<dbReference type="GO" id="GO:0005739">
    <property type="term" value="C:mitochondrion"/>
    <property type="evidence" value="ECO:0000314"/>
    <property type="project" value="HPA"/>
</dbReference>
<dbReference type="GO" id="GO:0005730">
    <property type="term" value="C:nucleolus"/>
    <property type="evidence" value="ECO:0000314"/>
    <property type="project" value="HPA"/>
</dbReference>
<dbReference type="GO" id="GO:0004311">
    <property type="term" value="F:geranylgeranyl diphosphate synthase activity"/>
    <property type="evidence" value="ECO:0000316"/>
    <property type="project" value="MGI"/>
</dbReference>
<dbReference type="GO" id="GO:0008495">
    <property type="term" value="F:protoheme IX farnesyltransferase activity"/>
    <property type="evidence" value="ECO:0000318"/>
    <property type="project" value="GO_Central"/>
</dbReference>
<dbReference type="GO" id="GO:0009060">
    <property type="term" value="P:aerobic respiration"/>
    <property type="evidence" value="ECO:0007669"/>
    <property type="project" value="Ensembl"/>
</dbReference>
<dbReference type="GO" id="GO:0055070">
    <property type="term" value="P:copper ion homeostasis"/>
    <property type="evidence" value="ECO:0007669"/>
    <property type="project" value="Ensembl"/>
</dbReference>
<dbReference type="GO" id="GO:0006784">
    <property type="term" value="P:heme A biosynthetic process"/>
    <property type="evidence" value="ECO:0000315"/>
    <property type="project" value="HGNC-UCL"/>
</dbReference>
<dbReference type="GO" id="GO:0006783">
    <property type="term" value="P:heme biosynthetic process"/>
    <property type="evidence" value="ECO:0000304"/>
    <property type="project" value="Reactome"/>
</dbReference>
<dbReference type="GO" id="GO:0048034">
    <property type="term" value="P:heme O biosynthetic process"/>
    <property type="evidence" value="ECO:0007669"/>
    <property type="project" value="Ensembl"/>
</dbReference>
<dbReference type="GO" id="GO:0002521">
    <property type="term" value="P:leukocyte differentiation"/>
    <property type="evidence" value="ECO:0007669"/>
    <property type="project" value="Ensembl"/>
</dbReference>
<dbReference type="GO" id="GO:0006629">
    <property type="term" value="P:lipid metabolic process"/>
    <property type="evidence" value="ECO:0007669"/>
    <property type="project" value="UniProtKB-KW"/>
</dbReference>
<dbReference type="GO" id="GO:0000266">
    <property type="term" value="P:mitochondrial fission"/>
    <property type="evidence" value="ECO:0007669"/>
    <property type="project" value="Ensembl"/>
</dbReference>
<dbReference type="GO" id="GO:0035264">
    <property type="term" value="P:multicellular organism growth"/>
    <property type="evidence" value="ECO:0007669"/>
    <property type="project" value="Ensembl"/>
</dbReference>
<dbReference type="GO" id="GO:0008535">
    <property type="term" value="P:respiratory chain complex IV assembly"/>
    <property type="evidence" value="ECO:0000315"/>
    <property type="project" value="HGNC-UCL"/>
</dbReference>
<dbReference type="CDD" id="cd13957">
    <property type="entry name" value="PT_UbiA_Cox10"/>
    <property type="match status" value="1"/>
</dbReference>
<dbReference type="FunFam" id="1.10.357.140:FF:000004">
    <property type="entry name" value="Protoheme IX farnesyltransferase, mitochondrial"/>
    <property type="match status" value="1"/>
</dbReference>
<dbReference type="Gene3D" id="1.10.357.140">
    <property type="entry name" value="UbiA prenyltransferase"/>
    <property type="match status" value="1"/>
</dbReference>
<dbReference type="HAMAP" id="MF_00154">
    <property type="entry name" value="CyoE_CtaB"/>
    <property type="match status" value="1"/>
</dbReference>
<dbReference type="InterPro" id="IPR006369">
    <property type="entry name" value="Protohaem_IX_farnesylTrfase"/>
</dbReference>
<dbReference type="InterPro" id="IPR016315">
    <property type="entry name" value="Protohaem_IX_farnesylTrfase_mt"/>
</dbReference>
<dbReference type="InterPro" id="IPR000537">
    <property type="entry name" value="UbiA_prenyltransferase"/>
</dbReference>
<dbReference type="InterPro" id="IPR030470">
    <property type="entry name" value="UbiA_prenylTrfase_CS"/>
</dbReference>
<dbReference type="InterPro" id="IPR044878">
    <property type="entry name" value="UbiA_sf"/>
</dbReference>
<dbReference type="NCBIfam" id="TIGR01473">
    <property type="entry name" value="cyoE_ctaB"/>
    <property type="match status" value="1"/>
</dbReference>
<dbReference type="PANTHER" id="PTHR43448">
    <property type="entry name" value="PROTOHEME IX FARNESYLTRANSFERASE, MITOCHONDRIAL"/>
    <property type="match status" value="1"/>
</dbReference>
<dbReference type="PANTHER" id="PTHR43448:SF2">
    <property type="entry name" value="PROTOHEME IX FARNESYLTRANSFERASE, MITOCHONDRIAL"/>
    <property type="match status" value="1"/>
</dbReference>
<dbReference type="Pfam" id="PF01040">
    <property type="entry name" value="UbiA"/>
    <property type="match status" value="1"/>
</dbReference>
<dbReference type="PIRSF" id="PIRSF001773">
    <property type="entry name" value="COX10"/>
    <property type="match status" value="1"/>
</dbReference>
<dbReference type="PROSITE" id="PS00943">
    <property type="entry name" value="UBIA"/>
    <property type="match status" value="1"/>
</dbReference>
<gene>
    <name type="primary">COX10</name>
</gene>
<keyword id="KW-0025">Alternative splicing</keyword>
<keyword id="KW-0225">Disease variant</keyword>
<keyword id="KW-0350">Heme biosynthesis</keyword>
<keyword id="KW-0431">Leigh syndrome</keyword>
<keyword id="KW-0443">Lipid metabolism</keyword>
<keyword id="KW-0472">Membrane</keyword>
<keyword id="KW-0496">Mitochondrion</keyword>
<keyword id="KW-1274">Primary mitochondrial disease</keyword>
<keyword id="KW-1267">Proteomics identification</keyword>
<keyword id="KW-1185">Reference proteome</keyword>
<keyword id="KW-0808">Transferase</keyword>
<keyword id="KW-0809">Transit peptide</keyword>
<keyword id="KW-0812">Transmembrane</keyword>
<keyword id="KW-1133">Transmembrane helix</keyword>
<proteinExistence type="evidence at protein level"/>
<comment type="function">
    <text evidence="1">Converts protoheme IX and farnesyl diphosphate to heme O.</text>
</comment>
<comment type="catalytic activity">
    <reaction evidence="2">
        <text>heme b + (2E,6E)-farnesyl diphosphate + H2O = Fe(II)-heme o + diphosphate</text>
        <dbReference type="Rhea" id="RHEA:28070"/>
        <dbReference type="ChEBI" id="CHEBI:15377"/>
        <dbReference type="ChEBI" id="CHEBI:33019"/>
        <dbReference type="ChEBI" id="CHEBI:60344"/>
        <dbReference type="ChEBI" id="CHEBI:60530"/>
        <dbReference type="ChEBI" id="CHEBI:175763"/>
        <dbReference type="EC" id="2.5.1.141"/>
    </reaction>
</comment>
<comment type="subcellular location">
    <subcellularLocation>
        <location>Mitochondrion membrane</location>
        <topology>Multi-pass membrane protein</topology>
    </subcellularLocation>
</comment>
<comment type="alternative products">
    <event type="alternative splicing"/>
    <isoform>
        <id>Q12887-1</id>
        <name>1</name>
        <sequence type="displayed"/>
    </isoform>
    <isoform>
        <id>Q12887-2</id>
        <name>2</name>
        <sequence type="described" ref="VSP_056867 VSP_056868"/>
    </isoform>
</comment>
<comment type="disease" evidence="4 5 9">
    <disease id="DI-05928">
        <name>Mitochondrial complex IV deficiency, nuclear type 3</name>
        <acronym>MC4DN3</acronym>
        <description>An autosomal recessive mitochondrial disorder characterized by cytochrome c oxidase deficiency. Clinical features include muscle weakness, hypotonia, ataxia, ptosis, metabolic acidosis, poor feeding, delayed motor development, anemia, sensorineural hearing loss, and cardiomyopathy.</description>
        <dbReference type="MIM" id="619046"/>
    </disease>
    <text>The disease is caused by variants affecting the gene represented in this entry.</text>
</comment>
<comment type="similarity">
    <text evidence="14">Belongs to the UbiA prenyltransferase family.</text>
</comment>
<evidence type="ECO:0000250" key="1"/>
<evidence type="ECO:0000250" key="2">
    <source>
        <dbReference type="UniProtKB" id="P24009"/>
    </source>
</evidence>
<evidence type="ECO:0000255" key="3"/>
<evidence type="ECO:0000269" key="4">
    <source>
    </source>
</evidence>
<evidence type="ECO:0000269" key="5">
    <source>
    </source>
</evidence>
<evidence type="ECO:0000269" key="6">
    <source>
    </source>
</evidence>
<evidence type="ECO:0000269" key="7">
    <source>
    </source>
</evidence>
<evidence type="ECO:0000269" key="8">
    <source>
    </source>
</evidence>
<evidence type="ECO:0000269" key="9">
    <source>
    </source>
</evidence>
<evidence type="ECO:0000269" key="10">
    <source>
    </source>
</evidence>
<evidence type="ECO:0000269" key="11">
    <source>
    </source>
</evidence>
<evidence type="ECO:0000269" key="12">
    <source ref="4"/>
</evidence>
<evidence type="ECO:0000303" key="13">
    <source>
    </source>
</evidence>
<evidence type="ECO:0000305" key="14"/>
<accession>Q12887</accession>
<accession>B2R6U5</accession>
<accession>B4DJ50</accession>
<accession>O15334</accession>
<accession>Q969F7</accession>
<sequence length="443" mass="48910">MAASPHTLSSRLLTGCVGGSVWYLERRTIQDSPHKFLHLLRNVNKQWITFQHFSFLKRMYVTQLNRSHNQQVRPKPEPVASPFLEKTSSGQAKAEIYEMRPLSPPSLSLSRKPNEKELIELEPDSVIEDSIDVGKETKEEKRWKEMKLQVYDLPGILARLSKIKLTALVVSTTAAGFALAPGPFDWPCFLLTSVGTGLASCAANSINQFFEVPFDSNMNRTKNRPLVRGQISPLLAVSFATCCAVPGVAILTLGVNPLTGALGLFNIFLYTCCYTPLKRISIANTWVGAVVGAIPPVMGWTAATGSLDAGAFLLGGILYSWQFPHFNALSWGLREDYSRGGYCMMSVTHPGLCRRVALRHCLALLVLSAAAPVLDITTWTFPIMALPINAYISYLGFRFYVDADRRSSRRLFFCSLWHLPLLLLLMLTCKRPSGGGDAGPPPS</sequence>
<organism>
    <name type="scientific">Homo sapiens</name>
    <name type="common">Human</name>
    <dbReference type="NCBI Taxonomy" id="9606"/>
    <lineage>
        <taxon>Eukaryota</taxon>
        <taxon>Metazoa</taxon>
        <taxon>Chordata</taxon>
        <taxon>Craniata</taxon>
        <taxon>Vertebrata</taxon>
        <taxon>Euteleostomi</taxon>
        <taxon>Mammalia</taxon>
        <taxon>Eutheria</taxon>
        <taxon>Euarchontoglires</taxon>
        <taxon>Primates</taxon>
        <taxon>Haplorrhini</taxon>
        <taxon>Catarrhini</taxon>
        <taxon>Hominidae</taxon>
        <taxon>Homo</taxon>
    </lineage>
</organism>
<name>COX10_HUMAN</name>